<reference key="1">
    <citation type="submission" date="2007-10" db="EMBL/GenBank/DDBJ databases">
        <title>Complete sequence of Methanococcus maripaludis C6.</title>
        <authorList>
            <consortium name="US DOE Joint Genome Institute"/>
            <person name="Copeland A."/>
            <person name="Lucas S."/>
            <person name="Lapidus A."/>
            <person name="Barry K."/>
            <person name="Glavina del Rio T."/>
            <person name="Dalin E."/>
            <person name="Tice H."/>
            <person name="Pitluck S."/>
            <person name="Clum A."/>
            <person name="Schmutz J."/>
            <person name="Larimer F."/>
            <person name="Land M."/>
            <person name="Hauser L."/>
            <person name="Kyrpides N."/>
            <person name="Mikhailova N."/>
            <person name="Sieprawska-Lupa M."/>
            <person name="Whitman W.B."/>
            <person name="Richardson P."/>
        </authorList>
    </citation>
    <scope>NUCLEOTIDE SEQUENCE [LARGE SCALE GENOMIC DNA]</scope>
    <source>
        <strain>C6 / ATCC BAA-1332</strain>
    </source>
</reference>
<feature type="chain" id="PRO_0000350680" description="Geranylgeranylglyceryl phosphate synthase">
    <location>
        <begin position="1"/>
        <end position="256"/>
    </location>
</feature>
<feature type="binding site" evidence="1">
    <location>
        <position position="28"/>
    </location>
    <ligand>
        <name>Mg(2+)</name>
        <dbReference type="ChEBI" id="CHEBI:18420"/>
    </ligand>
</feature>
<feature type="binding site" evidence="1">
    <location>
        <position position="53"/>
    </location>
    <ligand>
        <name>Mg(2+)</name>
        <dbReference type="ChEBI" id="CHEBI:18420"/>
    </ligand>
</feature>
<feature type="binding site" evidence="1">
    <location>
        <begin position="172"/>
        <end position="178"/>
    </location>
    <ligand>
        <name>sn-glycerol 1-phosphate</name>
        <dbReference type="ChEBI" id="CHEBI:57685"/>
    </ligand>
</feature>
<feature type="binding site" evidence="1">
    <location>
        <begin position="203"/>
        <end position="204"/>
    </location>
    <ligand>
        <name>sn-glycerol 1-phosphate</name>
        <dbReference type="ChEBI" id="CHEBI:57685"/>
    </ligand>
</feature>
<feature type="binding site" evidence="1">
    <location>
        <begin position="225"/>
        <end position="226"/>
    </location>
    <ligand>
        <name>sn-glycerol 1-phosphate</name>
        <dbReference type="ChEBI" id="CHEBI:57685"/>
    </ligand>
</feature>
<name>GGGPS_METM6</name>
<comment type="function">
    <text evidence="1">Prenyltransferase that catalyzes the transfer of the geranylgeranyl moiety of geranylgeranyl diphosphate (GGPP) to the C3 hydroxyl of sn-glycerol-1-phosphate (G1P). This reaction is the first ether-bond-formation step in the biosynthesis of archaeal membrane lipids.</text>
</comment>
<comment type="catalytic activity">
    <reaction evidence="1">
        <text>sn-glycerol 1-phosphate + (2E,6E,10E)-geranylgeranyl diphosphate = sn-3-O-(geranylgeranyl)glycerol 1-phosphate + diphosphate</text>
        <dbReference type="Rhea" id="RHEA:23404"/>
        <dbReference type="ChEBI" id="CHEBI:33019"/>
        <dbReference type="ChEBI" id="CHEBI:57677"/>
        <dbReference type="ChEBI" id="CHEBI:57685"/>
        <dbReference type="ChEBI" id="CHEBI:58756"/>
        <dbReference type="EC" id="2.5.1.41"/>
    </reaction>
</comment>
<comment type="cofactor">
    <cofactor evidence="1">
        <name>Mg(2+)</name>
        <dbReference type="ChEBI" id="CHEBI:18420"/>
    </cofactor>
</comment>
<comment type="pathway">
    <text evidence="1">Membrane lipid metabolism; glycerophospholipid metabolism.</text>
</comment>
<comment type="subcellular location">
    <subcellularLocation>
        <location evidence="1">Cytoplasm</location>
    </subcellularLocation>
</comment>
<comment type="similarity">
    <text evidence="1">Belongs to the GGGP/HepGP synthase family. Group II subfamily.</text>
</comment>
<sequence length="256" mass="27871">MQIKIGEVESKLNEIIEEEGAAYFVLIDPDEKNYRKIANHVKNYADAIIIGGSIGIINLDEVTKEIKEITGLPTILFPGNVDGVTKEADAVLFMSLMNSKNTYWNMTAPTLGALTIKKYGLETLPMAYLGIEPISKTAVGFVGEVNEIPQKKPEIAGIYSLSASYFGMRWVYLEAGSGAEYPVNNEMIGISKKLSGINIIVGGGIRTPEVAYEKVMSGADVIVTGTLTEKDPKAVEEMKKAIKKAGMDKLKMLSKK</sequence>
<accession>A9A8T4</accession>
<protein>
    <recommendedName>
        <fullName evidence="1">Geranylgeranylglyceryl phosphate synthase</fullName>
        <shortName evidence="1">GGGP synthase</shortName>
        <shortName evidence="1">GGGPS</shortName>
        <ecNumber evidence="1">2.5.1.41</ecNumber>
    </recommendedName>
    <alternativeName>
        <fullName evidence="1">(S)-3-O-geranylgeranylglyceryl phosphate synthase</fullName>
    </alternativeName>
    <alternativeName>
        <fullName evidence="1">Phosphoglycerol geranylgeranyltransferase</fullName>
    </alternativeName>
</protein>
<keyword id="KW-0963">Cytoplasm</keyword>
<keyword id="KW-0444">Lipid biosynthesis</keyword>
<keyword id="KW-0443">Lipid metabolism</keyword>
<keyword id="KW-0460">Magnesium</keyword>
<keyword id="KW-0479">Metal-binding</keyword>
<keyword id="KW-0594">Phospholipid biosynthesis</keyword>
<keyword id="KW-1208">Phospholipid metabolism</keyword>
<keyword id="KW-0808">Transferase</keyword>
<dbReference type="EC" id="2.5.1.41" evidence="1"/>
<dbReference type="EMBL" id="CP000867">
    <property type="protein sequence ID" value="ABX01757.1"/>
    <property type="molecule type" value="Genomic_DNA"/>
</dbReference>
<dbReference type="SMR" id="A9A8T4"/>
<dbReference type="STRING" id="444158.MmarC6_0942"/>
<dbReference type="KEGG" id="mmx:MmarC6_0942"/>
<dbReference type="eggNOG" id="arCOG01085">
    <property type="taxonomic scope" value="Archaea"/>
</dbReference>
<dbReference type="HOGENOM" id="CLU_068610_0_0_2"/>
<dbReference type="OrthoDB" id="7409at2157"/>
<dbReference type="PhylomeDB" id="A9A8T4"/>
<dbReference type="UniPathway" id="UPA00940"/>
<dbReference type="GO" id="GO:0005737">
    <property type="term" value="C:cytoplasm"/>
    <property type="evidence" value="ECO:0007669"/>
    <property type="project" value="UniProtKB-SubCell"/>
</dbReference>
<dbReference type="GO" id="GO:0000107">
    <property type="term" value="F:imidazoleglycerol-phosphate synthase activity"/>
    <property type="evidence" value="ECO:0007669"/>
    <property type="project" value="TreeGrafter"/>
</dbReference>
<dbReference type="GO" id="GO:0000287">
    <property type="term" value="F:magnesium ion binding"/>
    <property type="evidence" value="ECO:0007669"/>
    <property type="project" value="UniProtKB-UniRule"/>
</dbReference>
<dbReference type="GO" id="GO:0047294">
    <property type="term" value="F:phosphoglycerol geranylgeranyltransferase activity"/>
    <property type="evidence" value="ECO:0007669"/>
    <property type="project" value="UniProtKB-UniRule"/>
</dbReference>
<dbReference type="GO" id="GO:0046474">
    <property type="term" value="P:glycerophospholipid biosynthetic process"/>
    <property type="evidence" value="ECO:0007669"/>
    <property type="project" value="UniProtKB-UniRule"/>
</dbReference>
<dbReference type="Gene3D" id="3.20.20.390">
    <property type="entry name" value="FMN-linked oxidoreductases"/>
    <property type="match status" value="1"/>
</dbReference>
<dbReference type="HAMAP" id="MF_00112">
    <property type="entry name" value="GGGP_HepGP_synthase"/>
    <property type="match status" value="1"/>
</dbReference>
<dbReference type="InterPro" id="IPR038597">
    <property type="entry name" value="GGGP/HepGP_synthase_sf"/>
</dbReference>
<dbReference type="InterPro" id="IPR008205">
    <property type="entry name" value="GGGP_HepGP_synthase"/>
</dbReference>
<dbReference type="InterPro" id="IPR010946">
    <property type="entry name" value="GGGP_synth"/>
</dbReference>
<dbReference type="InterPro" id="IPR050064">
    <property type="entry name" value="IGPS_HisA/HisF"/>
</dbReference>
<dbReference type="NCBIfam" id="TIGR01769">
    <property type="entry name" value="GGGP"/>
    <property type="match status" value="1"/>
</dbReference>
<dbReference type="NCBIfam" id="TIGR01768">
    <property type="entry name" value="GGGP-family"/>
    <property type="match status" value="1"/>
</dbReference>
<dbReference type="NCBIfam" id="NF003198">
    <property type="entry name" value="PRK04169.1-2"/>
    <property type="match status" value="1"/>
</dbReference>
<dbReference type="NCBIfam" id="NF003201">
    <property type="entry name" value="PRK04169.1-5"/>
    <property type="match status" value="1"/>
</dbReference>
<dbReference type="PANTHER" id="PTHR21235:SF22">
    <property type="entry name" value="GERANYLGERANYLGLYCERYL PHOSPHATE SYNTHASE"/>
    <property type="match status" value="1"/>
</dbReference>
<dbReference type="PANTHER" id="PTHR21235">
    <property type="entry name" value="IMIDAZOLE GLYCEROL PHOSPHATE SYNTHASE SUBUNIT HISF/H IGP SYNTHASE SUBUNIT HISF/H"/>
    <property type="match status" value="1"/>
</dbReference>
<dbReference type="Pfam" id="PF01884">
    <property type="entry name" value="PcrB"/>
    <property type="match status" value="1"/>
</dbReference>
<dbReference type="SUPFAM" id="SSF51395">
    <property type="entry name" value="FMN-linked oxidoreductases"/>
    <property type="match status" value="1"/>
</dbReference>
<proteinExistence type="inferred from homology"/>
<organism>
    <name type="scientific">Methanococcus maripaludis (strain C6 / ATCC BAA-1332)</name>
    <dbReference type="NCBI Taxonomy" id="444158"/>
    <lineage>
        <taxon>Archaea</taxon>
        <taxon>Methanobacteriati</taxon>
        <taxon>Methanobacteriota</taxon>
        <taxon>Methanomada group</taxon>
        <taxon>Methanococci</taxon>
        <taxon>Methanococcales</taxon>
        <taxon>Methanococcaceae</taxon>
        <taxon>Methanococcus</taxon>
    </lineage>
</organism>
<gene>
    <name type="ordered locus">MmarC6_0942</name>
</gene>
<evidence type="ECO:0000255" key="1">
    <source>
        <dbReference type="HAMAP-Rule" id="MF_00112"/>
    </source>
</evidence>